<keyword id="KW-0520">NAD</keyword>
<keyword id="KW-0521">NADP</keyword>
<keyword id="KW-0560">Oxidoreductase</keyword>
<keyword id="KW-0614">Plasmid</keyword>
<geneLocation type="plasmid">
    <name>pAO1</name>
</geneLocation>
<gene>
    <name type="primary">sad</name>
    <name type="ORF">ORF58</name>
</gene>
<comment type="function">
    <text evidence="3">Catalyzes the NAD(P)(+)-dependent oxidation of succinate semialdehyde to succinate, which may enter the citric acid cycle. Is involved in the catabolism of 4-methylaminobutanoate produced from nicotine. Acts preferentially with NADP(+) as cosubstrate but can also use NAD(+). To a lesser extent, is active also towards butyraldehyde (8.5% of the activity observed with succinate semialdehyde) and propionaldehyde (1.6% of the activity observed with succinate semialdehyde) as substrates.</text>
</comment>
<comment type="catalytic activity">
    <reaction evidence="3">
        <text>succinate semialdehyde + NAD(+) + H2O = succinate + NADH + 2 H(+)</text>
        <dbReference type="Rhea" id="RHEA:13217"/>
        <dbReference type="ChEBI" id="CHEBI:15377"/>
        <dbReference type="ChEBI" id="CHEBI:15378"/>
        <dbReference type="ChEBI" id="CHEBI:30031"/>
        <dbReference type="ChEBI" id="CHEBI:57540"/>
        <dbReference type="ChEBI" id="CHEBI:57706"/>
        <dbReference type="ChEBI" id="CHEBI:57945"/>
        <dbReference type="EC" id="1.2.1.16"/>
    </reaction>
</comment>
<comment type="catalytic activity">
    <reaction evidence="3">
        <text>succinate semialdehyde + NADP(+) + H2O = succinate + NADPH + 2 H(+)</text>
        <dbReference type="Rhea" id="RHEA:13213"/>
        <dbReference type="ChEBI" id="CHEBI:15377"/>
        <dbReference type="ChEBI" id="CHEBI:15378"/>
        <dbReference type="ChEBI" id="CHEBI:30031"/>
        <dbReference type="ChEBI" id="CHEBI:57706"/>
        <dbReference type="ChEBI" id="CHEBI:57783"/>
        <dbReference type="ChEBI" id="CHEBI:58349"/>
        <dbReference type="EC" id="1.2.1.16"/>
    </reaction>
</comment>
<comment type="biophysicochemical properties">
    <kinetics>
        <KM evidence="3">0.34 mM for succinate semialdehyde</KM>
        <KM evidence="3">0.13 mM for NADP(+)</KM>
        <text>kcat is 23000 sec(-1) with NADP(+) as cosubstrate.</text>
    </kinetics>
</comment>
<comment type="pathway">
    <text evidence="3">Alkaloid degradation; nicotine degradation.</text>
</comment>
<comment type="subunit">
    <text evidence="3">Homodimer.</text>
</comment>
<comment type="induction">
    <text evidence="3">Is transcribed only in the presence of nicotine.</text>
</comment>
<comment type="similarity">
    <text evidence="4">Belongs to the aldehyde dehydrogenase family.</text>
</comment>
<evidence type="ECO:0000250" key="1"/>
<evidence type="ECO:0000255" key="2">
    <source>
        <dbReference type="PROSITE-ProRule" id="PRU10007"/>
    </source>
</evidence>
<evidence type="ECO:0000269" key="3">
    <source>
    </source>
</evidence>
<evidence type="ECO:0000305" key="4"/>
<proteinExistence type="evidence at protein level"/>
<sequence>MLATLASATSEDAVAALEAACAAQTSWARTAPRVRAEILRRAFDLVTARSEDFALLMTLEMGKPLAEARGEVAYGAEFLRWFSEETVRDYGRYLTTPEGKNKILVQHKPVGPCLLITPWNFPLAMATRKVAPAVAAGCTMVLKPAKLTPLTSQLFAQTMMEAGLPAGVLNVVSSSSASGISGPLLKDSRLRKVSFTGSTPVGKRLMSDASRHVLRTSMELGGNAPFVVFEDADLDKAVEGAMAAKMRNMGEACTAANRFLVQESVAQEFTRKFAAAMGALSTGRGTDPASQVGPLINNGARDDIHALVTAAVDAGAVAVTGGAPVDGPGYFYQPTVLADVPNNAAILGQEIFGPVAPVTTFTTEQDAIKLANASEYGLAAYLYSRDFNRLLRVAEQIEFGMVGFNAGIISNAAAPFGGVKQSGLGREGGSEGIAEYTTTQYIGIADPYEN</sequence>
<dbReference type="EC" id="1.2.1.16"/>
<dbReference type="EMBL" id="AJ507836">
    <property type="protein sequence ID" value="CAD47916.1"/>
    <property type="molecule type" value="Genomic_DNA"/>
</dbReference>
<dbReference type="RefSeq" id="YP_007988742.1">
    <property type="nucleotide sequence ID" value="NC_021229.1"/>
</dbReference>
<dbReference type="SMR" id="Q8GAI8"/>
<dbReference type="UniPathway" id="UPA00106"/>
<dbReference type="GO" id="GO:0004777">
    <property type="term" value="F:succinate-semialdehyde dehydrogenase (NAD+) activity"/>
    <property type="evidence" value="ECO:0007669"/>
    <property type="project" value="TreeGrafter"/>
</dbReference>
<dbReference type="GO" id="GO:0036243">
    <property type="term" value="F:succinate-semialdehyde dehydrogenase (NADP+) activity"/>
    <property type="evidence" value="ECO:0007669"/>
    <property type="project" value="RHEA"/>
</dbReference>
<dbReference type="GO" id="GO:0009450">
    <property type="term" value="P:gamma-aminobutyric acid catabolic process"/>
    <property type="evidence" value="ECO:0007669"/>
    <property type="project" value="TreeGrafter"/>
</dbReference>
<dbReference type="GO" id="GO:0019608">
    <property type="term" value="P:nicotine catabolic process"/>
    <property type="evidence" value="ECO:0007669"/>
    <property type="project" value="UniProtKB-UniPathway"/>
</dbReference>
<dbReference type="CDD" id="cd07103">
    <property type="entry name" value="ALDH_F5_SSADH_GabD"/>
    <property type="match status" value="1"/>
</dbReference>
<dbReference type="FunFam" id="3.40.605.10:FF:000026">
    <property type="entry name" value="Aldehyde dehydrogenase, putative"/>
    <property type="match status" value="1"/>
</dbReference>
<dbReference type="FunFam" id="3.40.605.10:FF:000007">
    <property type="entry name" value="NAD/NADP-dependent betaine aldehyde dehydrogenase"/>
    <property type="match status" value="1"/>
</dbReference>
<dbReference type="FunFam" id="3.40.309.10:FF:000004">
    <property type="entry name" value="Succinate-semialdehyde dehydrogenase I"/>
    <property type="match status" value="1"/>
</dbReference>
<dbReference type="Gene3D" id="3.40.605.10">
    <property type="entry name" value="Aldehyde Dehydrogenase, Chain A, domain 1"/>
    <property type="match status" value="1"/>
</dbReference>
<dbReference type="Gene3D" id="3.40.309.10">
    <property type="entry name" value="Aldehyde Dehydrogenase, Chain A, domain 2"/>
    <property type="match status" value="1"/>
</dbReference>
<dbReference type="InterPro" id="IPR016161">
    <property type="entry name" value="Ald_DH/histidinol_DH"/>
</dbReference>
<dbReference type="InterPro" id="IPR016163">
    <property type="entry name" value="Ald_DH_C"/>
</dbReference>
<dbReference type="InterPro" id="IPR029510">
    <property type="entry name" value="Ald_DH_CS_GLU"/>
</dbReference>
<dbReference type="InterPro" id="IPR016162">
    <property type="entry name" value="Ald_DH_N"/>
</dbReference>
<dbReference type="InterPro" id="IPR015590">
    <property type="entry name" value="Aldehyde_DH_dom"/>
</dbReference>
<dbReference type="InterPro" id="IPR050740">
    <property type="entry name" value="Aldehyde_DH_Superfamily"/>
</dbReference>
<dbReference type="PANTHER" id="PTHR43353">
    <property type="entry name" value="SUCCINATE-SEMIALDEHYDE DEHYDROGENASE, MITOCHONDRIAL"/>
    <property type="match status" value="1"/>
</dbReference>
<dbReference type="PANTHER" id="PTHR43353:SF5">
    <property type="entry name" value="SUCCINATE-SEMIALDEHYDE DEHYDROGENASE, MITOCHONDRIAL"/>
    <property type="match status" value="1"/>
</dbReference>
<dbReference type="Pfam" id="PF00171">
    <property type="entry name" value="Aldedh"/>
    <property type="match status" value="1"/>
</dbReference>
<dbReference type="SUPFAM" id="SSF53720">
    <property type="entry name" value="ALDH-like"/>
    <property type="match status" value="1"/>
</dbReference>
<dbReference type="PROSITE" id="PS00687">
    <property type="entry name" value="ALDEHYDE_DEHYDR_GLU"/>
    <property type="match status" value="1"/>
</dbReference>
<feature type="chain" id="PRO_0000429429" description="Succinate-semialdehyde dehydrogenase">
    <location>
        <begin position="1"/>
        <end position="450"/>
    </location>
</feature>
<feature type="active site" description="Proton acceptor" evidence="2">
    <location>
        <position position="219"/>
    </location>
</feature>
<feature type="active site" description="Nucleophile" evidence="2">
    <location>
        <position position="253"/>
    </location>
</feature>
<feature type="binding site" evidence="1">
    <location>
        <begin position="119"/>
        <end position="120"/>
    </location>
    <ligand>
        <name>NADP(+)</name>
        <dbReference type="ChEBI" id="CHEBI:58349"/>
    </ligand>
</feature>
<feature type="binding site" evidence="1">
    <location>
        <position position="128"/>
    </location>
    <ligand>
        <name>substrate</name>
    </ligand>
</feature>
<feature type="binding site" evidence="1">
    <location>
        <begin position="143"/>
        <end position="146"/>
    </location>
    <ligand>
        <name>NADP(+)</name>
        <dbReference type="ChEBI" id="CHEBI:58349"/>
    </ligand>
</feature>
<feature type="binding site" evidence="1">
    <location>
        <begin position="197"/>
        <end position="198"/>
    </location>
    <ligand>
        <name>NADP(+)</name>
        <dbReference type="ChEBI" id="CHEBI:58349"/>
    </ligand>
</feature>
<feature type="binding site" evidence="1">
    <location>
        <position position="220"/>
    </location>
    <ligand>
        <name>NADP(+)</name>
        <dbReference type="ChEBI" id="CHEBI:58349"/>
    </ligand>
</feature>
<feature type="binding site" evidence="1">
    <location>
        <position position="247"/>
    </location>
    <ligand>
        <name>substrate</name>
    </ligand>
</feature>
<feature type="binding site" evidence="1">
    <location>
        <position position="253"/>
    </location>
    <ligand>
        <name>substrate</name>
    </ligand>
</feature>
<feature type="binding site" evidence="1">
    <location>
        <position position="350"/>
    </location>
    <ligand>
        <name>NADP(+)</name>
        <dbReference type="ChEBI" id="CHEBI:58349"/>
    </ligand>
</feature>
<feature type="binding site" evidence="1">
    <location>
        <position position="410"/>
    </location>
    <ligand>
        <name>substrate</name>
    </ligand>
</feature>
<feature type="site" description="Transition state stabilizer" evidence="1">
    <location>
        <position position="120"/>
    </location>
</feature>
<accession>Q8GAI8</accession>
<protein>
    <recommendedName>
        <fullName>Succinate-semialdehyde dehydrogenase</fullName>
        <shortName>SsaDH</shortName>
        <ecNumber>1.2.1.16</ecNumber>
    </recommendedName>
</protein>
<reference key="1">
    <citation type="journal article" date="2003" name="J. Bacteriol.">
        <title>Sequence of the 165-kilobase catabolic plasmid pAO1 from Arthrobacter nicotinovorans and identification of a pAO1-dependent nicotine uptake system.</title>
        <authorList>
            <person name="Igloi G.L."/>
            <person name="Brandsch R."/>
        </authorList>
    </citation>
    <scope>NUCLEOTIDE SEQUENCE [GENOMIC DNA]</scope>
    <source>
        <strain>ATCC 49919 / DSM 420 / JCM 3874 / KCTC 9902 / LMG 16253 / NBRC 15511</strain>
        <plasmid>pAO1</plasmid>
    </source>
</reference>
<reference key="2">
    <citation type="journal article" date="2006" name="FEBS J.">
        <title>Final steps in the catabolism of nicotine.</title>
        <authorList>
            <person name="Chiribau C.B."/>
            <person name="Mihasan M."/>
            <person name="Ganas P."/>
            <person name="Igloi G.L."/>
            <person name="Artenie V."/>
            <person name="Brandsch R."/>
        </authorList>
    </citation>
    <scope>FUNCTION</scope>
    <scope>CATALYTIC ACTIVITY</scope>
    <scope>SUBSTRATE SPECIFICITY</scope>
    <scope>KINETIC PARAMETERS</scope>
    <scope>SUBUNIT</scope>
    <scope>PATHWAY</scope>
    <scope>INDUCTION</scope>
</reference>
<organism>
    <name type="scientific">Paenarthrobacter nicotinovorans</name>
    <name type="common">Arthrobacter nicotinovorans</name>
    <dbReference type="NCBI Taxonomy" id="29320"/>
    <lineage>
        <taxon>Bacteria</taxon>
        <taxon>Bacillati</taxon>
        <taxon>Actinomycetota</taxon>
        <taxon>Actinomycetes</taxon>
        <taxon>Micrococcales</taxon>
        <taxon>Micrococcaceae</taxon>
        <taxon>Paenarthrobacter</taxon>
    </lineage>
</organism>
<name>SSDH_PAENI</name>